<organism>
    <name type="scientific">Salmonella paratyphi A (strain AKU_12601)</name>
    <dbReference type="NCBI Taxonomy" id="554290"/>
    <lineage>
        <taxon>Bacteria</taxon>
        <taxon>Pseudomonadati</taxon>
        <taxon>Pseudomonadota</taxon>
        <taxon>Gammaproteobacteria</taxon>
        <taxon>Enterobacterales</taxon>
        <taxon>Enterobacteriaceae</taxon>
        <taxon>Salmonella</taxon>
    </lineage>
</organism>
<comment type="function">
    <text evidence="1">Catalyzes the isomerization of 5-dehydro-4-deoxy-D-glucuronate to 3-deoxy-D-glycero-2,5-hexodiulosonate.</text>
</comment>
<comment type="catalytic activity">
    <reaction evidence="1">
        <text>5-dehydro-4-deoxy-D-glucuronate = 3-deoxy-D-glycero-2,5-hexodiulosonate</text>
        <dbReference type="Rhea" id="RHEA:23896"/>
        <dbReference type="ChEBI" id="CHEBI:17117"/>
        <dbReference type="ChEBI" id="CHEBI:29071"/>
        <dbReference type="EC" id="5.3.1.17"/>
    </reaction>
</comment>
<comment type="cofactor">
    <cofactor evidence="1">
        <name>Zn(2+)</name>
        <dbReference type="ChEBI" id="CHEBI:29105"/>
    </cofactor>
    <text evidence="1">Binds 1 zinc ion per subunit.</text>
</comment>
<comment type="pathway">
    <text evidence="1">Glycan metabolism; pectin degradation; 2-dehydro-3-deoxy-D-gluconate from pectin: step 4/5.</text>
</comment>
<comment type="similarity">
    <text evidence="1">Belongs to the KduI family.</text>
</comment>
<accession>B5BFI4</accession>
<name>KDUI_SALPK</name>
<reference key="1">
    <citation type="journal article" date="2009" name="BMC Genomics">
        <title>Pseudogene accumulation in the evolutionary histories of Salmonella enterica serovars Paratyphi A and Typhi.</title>
        <authorList>
            <person name="Holt K.E."/>
            <person name="Thomson N.R."/>
            <person name="Wain J."/>
            <person name="Langridge G.C."/>
            <person name="Hasan R."/>
            <person name="Bhutta Z.A."/>
            <person name="Quail M.A."/>
            <person name="Norbertczak H."/>
            <person name="Walker D."/>
            <person name="Simmonds M."/>
            <person name="White B."/>
            <person name="Bason N."/>
            <person name="Mungall K."/>
            <person name="Dougan G."/>
            <person name="Parkhill J."/>
        </authorList>
    </citation>
    <scope>NUCLEOTIDE SEQUENCE [LARGE SCALE GENOMIC DNA]</scope>
    <source>
        <strain>AKU_12601</strain>
    </source>
</reference>
<sequence length="278" mass="31245">MDVRQSIHSEHAKTLDTQALRREFLIENIFVADEYTMVYSHIDRIIVGGIMPVSHPVEIGGEVGKQLGVSRLLDRRELGVINIGGAGAIIVDGQRHDIGHRDALYISKGAKELVFVSNEASRPAKFYYNCAPAHTAYPTKKVSPADVAPVTLGDNLTSNRRTINKYFVPDVLETCQLSMGLTELAPGNLWNTMPCHTHERRMEVYLYFNMEEDSCVFHMMGQPQETRHIVMRNEQAVISPSWSIHSGVGTKAYTFIWGMVGENQVFDDMDHVAVQDLR</sequence>
<protein>
    <recommendedName>
        <fullName evidence="1">4-deoxy-L-threo-5-hexosulose-uronate ketol-isomerase</fullName>
        <ecNumber evidence="1">5.3.1.17</ecNumber>
    </recommendedName>
    <alternativeName>
        <fullName evidence="1">5-keto-4-deoxyuronate isomerase</fullName>
    </alternativeName>
    <alternativeName>
        <fullName evidence="1">DKI isomerase</fullName>
    </alternativeName>
</protein>
<feature type="chain" id="PRO_1000131894" description="4-deoxy-L-threo-5-hexosulose-uronate ketol-isomerase">
    <location>
        <begin position="1"/>
        <end position="278"/>
    </location>
</feature>
<feature type="binding site" evidence="1">
    <location>
        <position position="196"/>
    </location>
    <ligand>
        <name>Zn(2+)</name>
        <dbReference type="ChEBI" id="CHEBI:29105"/>
    </ligand>
</feature>
<feature type="binding site" evidence="1">
    <location>
        <position position="198"/>
    </location>
    <ligand>
        <name>Zn(2+)</name>
        <dbReference type="ChEBI" id="CHEBI:29105"/>
    </ligand>
</feature>
<feature type="binding site" evidence="1">
    <location>
        <position position="203"/>
    </location>
    <ligand>
        <name>Zn(2+)</name>
        <dbReference type="ChEBI" id="CHEBI:29105"/>
    </ligand>
</feature>
<feature type="binding site" evidence="1">
    <location>
        <position position="245"/>
    </location>
    <ligand>
        <name>Zn(2+)</name>
        <dbReference type="ChEBI" id="CHEBI:29105"/>
    </ligand>
</feature>
<proteinExistence type="inferred from homology"/>
<dbReference type="EC" id="5.3.1.17" evidence="1"/>
<dbReference type="EMBL" id="FM200053">
    <property type="protein sequence ID" value="CAR60929.1"/>
    <property type="molecule type" value="Genomic_DNA"/>
</dbReference>
<dbReference type="RefSeq" id="WP_000383272.1">
    <property type="nucleotide sequence ID" value="NC_011147.1"/>
</dbReference>
<dbReference type="SMR" id="B5BFI4"/>
<dbReference type="KEGG" id="sek:SSPA2688"/>
<dbReference type="HOGENOM" id="CLU_062609_0_0_6"/>
<dbReference type="UniPathway" id="UPA00545">
    <property type="reaction ID" value="UER00826"/>
</dbReference>
<dbReference type="Proteomes" id="UP000001869">
    <property type="component" value="Chromosome"/>
</dbReference>
<dbReference type="GO" id="GO:0008697">
    <property type="term" value="F:4-deoxy-L-threo-5-hexosulose-uronate ketol-isomerase activity"/>
    <property type="evidence" value="ECO:0007669"/>
    <property type="project" value="UniProtKB-UniRule"/>
</dbReference>
<dbReference type="GO" id="GO:0008270">
    <property type="term" value="F:zinc ion binding"/>
    <property type="evidence" value="ECO:0007669"/>
    <property type="project" value="UniProtKB-UniRule"/>
</dbReference>
<dbReference type="GO" id="GO:0019698">
    <property type="term" value="P:D-galacturonate catabolic process"/>
    <property type="evidence" value="ECO:0007669"/>
    <property type="project" value="TreeGrafter"/>
</dbReference>
<dbReference type="GO" id="GO:0042840">
    <property type="term" value="P:D-glucuronate catabolic process"/>
    <property type="evidence" value="ECO:0007669"/>
    <property type="project" value="TreeGrafter"/>
</dbReference>
<dbReference type="GO" id="GO:0045490">
    <property type="term" value="P:pectin catabolic process"/>
    <property type="evidence" value="ECO:0007669"/>
    <property type="project" value="UniProtKB-UniRule"/>
</dbReference>
<dbReference type="CDD" id="cd20491">
    <property type="entry name" value="cupin_KduI_C"/>
    <property type="match status" value="1"/>
</dbReference>
<dbReference type="CDD" id="cd20294">
    <property type="entry name" value="cupin_KduI_N"/>
    <property type="match status" value="1"/>
</dbReference>
<dbReference type="FunFam" id="2.60.120.10:FF:000018">
    <property type="entry name" value="4-deoxy-L-threo-5-hexosulose-uronate ketol-isomerase"/>
    <property type="match status" value="1"/>
</dbReference>
<dbReference type="FunFam" id="2.60.120.520:FF:000001">
    <property type="entry name" value="4-deoxy-L-threo-5-hexosulose-uronate ketol-isomerase"/>
    <property type="match status" value="1"/>
</dbReference>
<dbReference type="Gene3D" id="2.60.120.10">
    <property type="entry name" value="Jelly Rolls"/>
    <property type="match status" value="1"/>
</dbReference>
<dbReference type="Gene3D" id="2.60.120.520">
    <property type="entry name" value="pectin degrading enzyme 5-keto 4- deoxyuronate isomerase, domain 1"/>
    <property type="match status" value="1"/>
</dbReference>
<dbReference type="HAMAP" id="MF_00687">
    <property type="entry name" value="KduI"/>
    <property type="match status" value="1"/>
</dbReference>
<dbReference type="InterPro" id="IPR007045">
    <property type="entry name" value="KduI"/>
</dbReference>
<dbReference type="InterPro" id="IPR021120">
    <property type="entry name" value="KduI/IolB_isomerase"/>
</dbReference>
<dbReference type="InterPro" id="IPR027449">
    <property type="entry name" value="KduI_N"/>
</dbReference>
<dbReference type="InterPro" id="IPR014710">
    <property type="entry name" value="RmlC-like_jellyroll"/>
</dbReference>
<dbReference type="InterPro" id="IPR011051">
    <property type="entry name" value="RmlC_Cupin_sf"/>
</dbReference>
<dbReference type="NCBIfam" id="NF002091">
    <property type="entry name" value="PRK00924.1"/>
    <property type="match status" value="1"/>
</dbReference>
<dbReference type="PANTHER" id="PTHR38461">
    <property type="entry name" value="4-DEOXY-L-THREO-5-HEXOSULOSE-URONATE KETOL-ISOMERASE"/>
    <property type="match status" value="1"/>
</dbReference>
<dbReference type="PANTHER" id="PTHR38461:SF1">
    <property type="entry name" value="4-DEOXY-L-THREO-5-HEXOSULOSE-URONATE KETOL-ISOMERASE"/>
    <property type="match status" value="1"/>
</dbReference>
<dbReference type="Pfam" id="PF04962">
    <property type="entry name" value="KduI"/>
    <property type="match status" value="1"/>
</dbReference>
<dbReference type="PIRSF" id="PIRSF006625">
    <property type="entry name" value="KduI"/>
    <property type="match status" value="1"/>
</dbReference>
<dbReference type="SUPFAM" id="SSF51182">
    <property type="entry name" value="RmlC-like cupins"/>
    <property type="match status" value="1"/>
</dbReference>
<keyword id="KW-0413">Isomerase</keyword>
<keyword id="KW-0479">Metal-binding</keyword>
<keyword id="KW-0862">Zinc</keyword>
<evidence type="ECO:0000255" key="1">
    <source>
        <dbReference type="HAMAP-Rule" id="MF_00687"/>
    </source>
</evidence>
<gene>
    <name evidence="1" type="primary">kduI</name>
    <name type="ordered locus">SSPA2688</name>
</gene>